<feature type="chain" id="PRO_0000082658" description="Ras-like protein">
    <location>
        <begin position="1"/>
        <end position="183" status="greater than"/>
    </location>
</feature>
<feature type="short sequence motif" description="Effector region">
    <location>
        <begin position="32"/>
        <end position="40"/>
    </location>
</feature>
<feature type="binding site" evidence="1">
    <location>
        <begin position="10"/>
        <end position="17"/>
    </location>
    <ligand>
        <name>GTP</name>
        <dbReference type="ChEBI" id="CHEBI:37565"/>
    </ligand>
</feature>
<feature type="binding site" evidence="1">
    <location>
        <begin position="57"/>
        <end position="61"/>
    </location>
    <ligand>
        <name>GTP</name>
        <dbReference type="ChEBI" id="CHEBI:37565"/>
    </ligand>
</feature>
<feature type="binding site" evidence="1">
    <location>
        <begin position="116"/>
        <end position="119"/>
    </location>
    <ligand>
        <name>GTP</name>
        <dbReference type="ChEBI" id="CHEBI:37565"/>
    </ligand>
</feature>
<feature type="non-terminal residue">
    <location>
        <position position="183"/>
    </location>
</feature>
<sequence length="183" mass="21043">MTEYKLVVVGAGGVGKSALTIQLIQNHFVDEYDPTIEDSYRKQVVIDGETCLLDILDTAGQEEYSAMRDQYMRTGEGFLCVFAINNTKSFEDIHHYREQIKRVKDSEDVPMVLVGNKCDLPSRSVDTKQAQDLARSYGIPFIETSAKTRQRVEDAFYTLVREIRQYRLRKLSKEEETTQCIKL</sequence>
<reference key="1">
    <citation type="journal article" date="1986" name="Differentiation">
        <title>Extensive sequence homology of the goldfish ras gene to mammalian ras genes.</title>
        <authorList>
            <person name="Nemoto N."/>
            <person name="Kodama K."/>
            <person name="Tazawa A."/>
            <person name="Masahito P."/>
            <person name="Ishikawa T."/>
        </authorList>
    </citation>
    <scope>NUCLEOTIDE SEQUENCE [GENOMIC DNA]</scope>
    <source>
        <strain>Wakin</strain>
        <tissue>Liver</tissue>
    </source>
</reference>
<reference key="2">
    <citation type="journal article" date="1987" name="J. Cancer Res. Clin. Oncol.">
        <title>Nucleotide sequence comparison of the predicted first exonic region of goldfish ras gene between normal and neoplastic tissues.</title>
        <authorList>
            <person name="Nemoto N."/>
            <person name="Kodama K."/>
            <person name="Tazawa A."/>
            <person name="Matsumoto J."/>
            <person name="Masahito P."/>
            <person name="Ishikawa T."/>
        </authorList>
    </citation>
    <scope>NUCLEOTIDE SEQUENCE [GENOMIC DNA]</scope>
    <source>
        <tissue>Liver</tissue>
    </source>
</reference>
<name>RAS_CARAU</name>
<dbReference type="EC" id="3.6.5.2" evidence="2"/>
<dbReference type="EMBL" id="AH002484">
    <property type="protein sequence ID" value="AAA49189.1"/>
    <property type="molecule type" value="Genomic_DNA"/>
</dbReference>
<dbReference type="EMBL" id="X12878">
    <property type="protein sequence ID" value="CAA31371.1"/>
    <property type="molecule type" value="Genomic_DNA"/>
</dbReference>
<dbReference type="EMBL" id="M38485">
    <property type="protein sequence ID" value="AAA49188.1"/>
    <property type="molecule type" value="Genomic_DNA"/>
</dbReference>
<dbReference type="EMBL" id="M38486">
    <property type="protein sequence ID" value="AAA62759.1"/>
    <property type="molecule type" value="Genomic_DNA"/>
</dbReference>
<dbReference type="PIR" id="S05483">
    <property type="entry name" value="S05483"/>
</dbReference>
<dbReference type="PIR" id="S06217">
    <property type="entry name" value="S06217"/>
</dbReference>
<dbReference type="BMRB" id="P05774"/>
<dbReference type="SMR" id="P05774"/>
<dbReference type="Proteomes" id="UP000515129">
    <property type="component" value="Unplaced"/>
</dbReference>
<dbReference type="GO" id="GO:0005737">
    <property type="term" value="C:cytoplasm"/>
    <property type="evidence" value="ECO:0000250"/>
    <property type="project" value="AgBase"/>
</dbReference>
<dbReference type="GO" id="GO:0005886">
    <property type="term" value="C:plasma membrane"/>
    <property type="evidence" value="ECO:0000250"/>
    <property type="project" value="AgBase"/>
</dbReference>
<dbReference type="GO" id="GO:0003925">
    <property type="term" value="F:G protein activity"/>
    <property type="evidence" value="ECO:0007669"/>
    <property type="project" value="UniProtKB-EC"/>
</dbReference>
<dbReference type="GO" id="GO:0005525">
    <property type="term" value="F:GTP binding"/>
    <property type="evidence" value="ECO:0007669"/>
    <property type="project" value="UniProtKB-KW"/>
</dbReference>
<dbReference type="GO" id="GO:0007165">
    <property type="term" value="P:signal transduction"/>
    <property type="evidence" value="ECO:0007669"/>
    <property type="project" value="InterPro"/>
</dbReference>
<dbReference type="CDD" id="cd04138">
    <property type="entry name" value="H_N_K_Ras_like"/>
    <property type="match status" value="1"/>
</dbReference>
<dbReference type="FunFam" id="3.40.50.300:FF:000096">
    <property type="entry name" value="KRAS proto-oncogene, GTPase"/>
    <property type="match status" value="1"/>
</dbReference>
<dbReference type="Gene3D" id="3.40.50.300">
    <property type="entry name" value="P-loop containing nucleotide triphosphate hydrolases"/>
    <property type="match status" value="1"/>
</dbReference>
<dbReference type="InterPro" id="IPR027417">
    <property type="entry name" value="P-loop_NTPase"/>
</dbReference>
<dbReference type="InterPro" id="IPR005225">
    <property type="entry name" value="Small_GTP-bd"/>
</dbReference>
<dbReference type="InterPro" id="IPR001806">
    <property type="entry name" value="Small_GTPase"/>
</dbReference>
<dbReference type="InterPro" id="IPR020849">
    <property type="entry name" value="Small_GTPase_Ras-type"/>
</dbReference>
<dbReference type="NCBIfam" id="TIGR00231">
    <property type="entry name" value="small_GTP"/>
    <property type="match status" value="1"/>
</dbReference>
<dbReference type="PANTHER" id="PTHR24070">
    <property type="entry name" value="RAS, DI-RAS, AND RHEB FAMILY MEMBERS OF SMALL GTPASE SUPERFAMILY"/>
    <property type="match status" value="1"/>
</dbReference>
<dbReference type="Pfam" id="PF00071">
    <property type="entry name" value="Ras"/>
    <property type="match status" value="1"/>
</dbReference>
<dbReference type="PRINTS" id="PR00449">
    <property type="entry name" value="RASTRNSFRMNG"/>
</dbReference>
<dbReference type="SMART" id="SM00175">
    <property type="entry name" value="RAB"/>
    <property type="match status" value="1"/>
</dbReference>
<dbReference type="SMART" id="SM00173">
    <property type="entry name" value="RAS"/>
    <property type="match status" value="1"/>
</dbReference>
<dbReference type="SMART" id="SM00174">
    <property type="entry name" value="RHO"/>
    <property type="match status" value="1"/>
</dbReference>
<dbReference type="SUPFAM" id="SSF52540">
    <property type="entry name" value="P-loop containing nucleoside triphosphate hydrolases"/>
    <property type="match status" value="1"/>
</dbReference>
<dbReference type="PROSITE" id="PS51421">
    <property type="entry name" value="RAS"/>
    <property type="match status" value="1"/>
</dbReference>
<comment type="function">
    <text>Ras proteins bind GDP/GTP and possess intrinsic GTPase activity.</text>
</comment>
<comment type="catalytic activity">
    <reaction evidence="2">
        <text>GTP + H2O = GDP + phosphate + H(+)</text>
        <dbReference type="Rhea" id="RHEA:19669"/>
        <dbReference type="ChEBI" id="CHEBI:15377"/>
        <dbReference type="ChEBI" id="CHEBI:15378"/>
        <dbReference type="ChEBI" id="CHEBI:37565"/>
        <dbReference type="ChEBI" id="CHEBI:43474"/>
        <dbReference type="ChEBI" id="CHEBI:58189"/>
        <dbReference type="EC" id="3.6.5.2"/>
    </reaction>
</comment>
<comment type="activity regulation">
    <text>Alternates between an inactive form bound to GDP and an active form bound to GTP. Activated by a guanine nucleotide-exchange factor (GEF) and inactivated by a GTPase-activating protein (GAP).</text>
</comment>
<comment type="subcellular location">
    <subcellularLocation>
        <location evidence="3">Cell membrane</location>
        <topology evidence="3">Lipid-anchor</topology>
        <orientation evidence="3">Cytoplasmic side</orientation>
    </subcellularLocation>
</comment>
<comment type="similarity">
    <text evidence="3">Belongs to the small GTPase superfamily. Ras family.</text>
</comment>
<keyword id="KW-1003">Cell membrane</keyword>
<keyword id="KW-0342">GTP-binding</keyword>
<keyword id="KW-0378">Hydrolase</keyword>
<keyword id="KW-0449">Lipoprotein</keyword>
<keyword id="KW-0472">Membrane</keyword>
<keyword id="KW-0547">Nucleotide-binding</keyword>
<keyword id="KW-0636">Prenylation</keyword>
<keyword id="KW-1185">Reference proteome</keyword>
<proteinExistence type="inferred from homology"/>
<evidence type="ECO:0000250" key="1"/>
<evidence type="ECO:0000250" key="2">
    <source>
        <dbReference type="UniProtKB" id="P01112"/>
    </source>
</evidence>
<evidence type="ECO:0000305" key="3"/>
<organism>
    <name type="scientific">Carassius auratus</name>
    <name type="common">Goldfish</name>
    <dbReference type="NCBI Taxonomy" id="7957"/>
    <lineage>
        <taxon>Eukaryota</taxon>
        <taxon>Metazoa</taxon>
        <taxon>Chordata</taxon>
        <taxon>Craniata</taxon>
        <taxon>Vertebrata</taxon>
        <taxon>Euteleostomi</taxon>
        <taxon>Actinopterygii</taxon>
        <taxon>Neopterygii</taxon>
        <taxon>Teleostei</taxon>
        <taxon>Ostariophysi</taxon>
        <taxon>Cypriniformes</taxon>
        <taxon>Cyprinidae</taxon>
        <taxon>Cyprininae</taxon>
        <taxon>Carassius</taxon>
    </lineage>
</organism>
<accession>P05774</accession>
<accession>Q90W85</accession>
<protein>
    <recommendedName>
        <fullName>Ras-like protein</fullName>
        <ecNumber evidence="2">3.6.5.2</ecNumber>
    </recommendedName>
</protein>